<reference key="1">
    <citation type="journal article" date="2000" name="Nature">
        <title>Ancestral chloroplast genome in Mesostigma viride reveals an early branch of green plant evolution.</title>
        <authorList>
            <person name="Lemieux C."/>
            <person name="Otis C."/>
            <person name="Turmel M."/>
        </authorList>
    </citation>
    <scope>NUCLEOTIDE SEQUENCE [LARGE SCALE GENOMIC DNA]</scope>
    <source>
        <strain>NIES-296 / KY-14 / CCMP 2046</strain>
    </source>
</reference>
<name>ATPH_MESVI</name>
<evidence type="ECO:0000255" key="1">
    <source>
        <dbReference type="HAMAP-Rule" id="MF_01396"/>
    </source>
</evidence>
<proteinExistence type="inferred from homology"/>
<geneLocation type="chloroplast"/>
<protein>
    <recommendedName>
        <fullName evidence="1">ATP synthase subunit c, chloroplastic</fullName>
    </recommendedName>
    <alternativeName>
        <fullName evidence="1">ATP synthase F(0) sector subunit c</fullName>
    </alternativeName>
    <alternativeName>
        <fullName evidence="1">ATPase subunit III</fullName>
    </alternativeName>
    <alternativeName>
        <fullName evidence="1">F-type ATPase subunit c</fullName>
        <shortName evidence="1">F-ATPase subunit c</shortName>
    </alternativeName>
    <alternativeName>
        <fullName evidence="1">Lipid-binding protein</fullName>
    </alternativeName>
</protein>
<comment type="function">
    <text evidence="1">F(1)F(0) ATP synthase produces ATP from ADP in the presence of a proton or sodium gradient. F-type ATPases consist of two structural domains, F(1) containing the extramembraneous catalytic core and F(0) containing the membrane proton channel, linked together by a central stalk and a peripheral stalk. During catalysis, ATP synthesis in the catalytic domain of F(1) is coupled via a rotary mechanism of the central stalk subunits to proton translocation.</text>
</comment>
<comment type="function">
    <text evidence="1">Key component of the F(0) channel; it plays a direct role in translocation across the membrane. A homomeric c-ring of between 10-14 subunits forms the central stalk rotor element with the F(1) delta and epsilon subunits.</text>
</comment>
<comment type="subunit">
    <text evidence="1">F-type ATPases have 2 components, F(1) - the catalytic core - and F(0) - the membrane proton channel. F(1) has five subunits: alpha(3), beta(3), gamma(1), delta(1), epsilon(1). F(0) has four main subunits: a(1), b(1), b'(1) and c(10-14). The alpha and beta chains form an alternating ring which encloses part of the gamma chain. F(1) is attached to F(0) by a central stalk formed by the gamma and epsilon chains, while a peripheral stalk is formed by the delta, b and b' chains.</text>
</comment>
<comment type="subcellular location">
    <subcellularLocation>
        <location evidence="1">Plastid</location>
        <location evidence="1">Chloroplast thylakoid membrane</location>
        <topology evidence="1">Multi-pass membrane protein</topology>
    </subcellularLocation>
</comment>
<comment type="miscellaneous">
    <text>In plastids the F-type ATPase is also known as CF(1)CF(0).</text>
</comment>
<comment type="similarity">
    <text evidence="1">Belongs to the ATPase C chain family.</text>
</comment>
<gene>
    <name evidence="1" type="primary">atpH</name>
</gene>
<dbReference type="EMBL" id="AF166114">
    <property type="protein sequence ID" value="AAF43821.1"/>
    <property type="molecule type" value="Genomic_DNA"/>
</dbReference>
<dbReference type="RefSeq" id="NP_038380.1">
    <property type="nucleotide sequence ID" value="NC_002186.1"/>
</dbReference>
<dbReference type="SMR" id="Q9MUT0"/>
<dbReference type="GeneID" id="800932"/>
<dbReference type="GO" id="GO:0009535">
    <property type="term" value="C:chloroplast thylakoid membrane"/>
    <property type="evidence" value="ECO:0007669"/>
    <property type="project" value="UniProtKB-SubCell"/>
</dbReference>
<dbReference type="GO" id="GO:0045259">
    <property type="term" value="C:proton-transporting ATP synthase complex"/>
    <property type="evidence" value="ECO:0007669"/>
    <property type="project" value="UniProtKB-KW"/>
</dbReference>
<dbReference type="GO" id="GO:0033177">
    <property type="term" value="C:proton-transporting two-sector ATPase complex, proton-transporting domain"/>
    <property type="evidence" value="ECO:0007669"/>
    <property type="project" value="InterPro"/>
</dbReference>
<dbReference type="GO" id="GO:0008289">
    <property type="term" value="F:lipid binding"/>
    <property type="evidence" value="ECO:0007669"/>
    <property type="project" value="UniProtKB-KW"/>
</dbReference>
<dbReference type="GO" id="GO:0046933">
    <property type="term" value="F:proton-transporting ATP synthase activity, rotational mechanism"/>
    <property type="evidence" value="ECO:0007669"/>
    <property type="project" value="UniProtKB-UniRule"/>
</dbReference>
<dbReference type="CDD" id="cd18183">
    <property type="entry name" value="ATP-synt_Fo_c_ATPH"/>
    <property type="match status" value="1"/>
</dbReference>
<dbReference type="FunFam" id="1.20.20.10:FF:000001">
    <property type="entry name" value="ATP synthase subunit c, chloroplastic"/>
    <property type="match status" value="1"/>
</dbReference>
<dbReference type="Gene3D" id="1.20.20.10">
    <property type="entry name" value="F1F0 ATP synthase subunit C"/>
    <property type="match status" value="1"/>
</dbReference>
<dbReference type="HAMAP" id="MF_01396">
    <property type="entry name" value="ATP_synth_c_bact"/>
    <property type="match status" value="1"/>
</dbReference>
<dbReference type="InterPro" id="IPR005953">
    <property type="entry name" value="ATP_synth_csu_bac/chlpt"/>
</dbReference>
<dbReference type="InterPro" id="IPR000454">
    <property type="entry name" value="ATP_synth_F0_csu"/>
</dbReference>
<dbReference type="InterPro" id="IPR020537">
    <property type="entry name" value="ATP_synth_F0_csu_DDCD_BS"/>
</dbReference>
<dbReference type="InterPro" id="IPR038662">
    <property type="entry name" value="ATP_synth_F0_csu_sf"/>
</dbReference>
<dbReference type="InterPro" id="IPR002379">
    <property type="entry name" value="ATPase_proteolipid_c-like_dom"/>
</dbReference>
<dbReference type="InterPro" id="IPR035921">
    <property type="entry name" value="F/V-ATP_Csub_sf"/>
</dbReference>
<dbReference type="NCBIfam" id="TIGR01260">
    <property type="entry name" value="ATP_synt_c"/>
    <property type="match status" value="1"/>
</dbReference>
<dbReference type="NCBIfam" id="NF005608">
    <property type="entry name" value="PRK07354.1"/>
    <property type="match status" value="1"/>
</dbReference>
<dbReference type="PANTHER" id="PTHR10031">
    <property type="entry name" value="ATP SYNTHASE LIPID-BINDING PROTEIN, MITOCHONDRIAL"/>
    <property type="match status" value="1"/>
</dbReference>
<dbReference type="PANTHER" id="PTHR10031:SF48">
    <property type="entry name" value="ATP SYNTHASE SUBUNIT C, CHLOROPLASTIC"/>
    <property type="match status" value="1"/>
</dbReference>
<dbReference type="Pfam" id="PF00137">
    <property type="entry name" value="ATP-synt_C"/>
    <property type="match status" value="1"/>
</dbReference>
<dbReference type="PRINTS" id="PR00124">
    <property type="entry name" value="ATPASEC"/>
</dbReference>
<dbReference type="SUPFAM" id="SSF81333">
    <property type="entry name" value="F1F0 ATP synthase subunit C"/>
    <property type="match status" value="1"/>
</dbReference>
<dbReference type="PROSITE" id="PS00605">
    <property type="entry name" value="ATPASE_C"/>
    <property type="match status" value="1"/>
</dbReference>
<feature type="chain" id="PRO_0000112193" description="ATP synthase subunit c, chloroplastic">
    <location>
        <begin position="1"/>
        <end position="82"/>
    </location>
</feature>
<feature type="transmembrane region" description="Helical" evidence="1">
    <location>
        <begin position="3"/>
        <end position="23"/>
    </location>
</feature>
<feature type="transmembrane region" description="Helical" evidence="1">
    <location>
        <begin position="57"/>
        <end position="77"/>
    </location>
</feature>
<feature type="site" description="Reversibly protonated during proton transport" evidence="1">
    <location>
        <position position="61"/>
    </location>
</feature>
<sequence length="82" mass="8115">MSPLISAASVLAAGLAVGLASIGPGVGQGTAAGQALEGIARQPEAEGKIRGTLLLSFAFMESLTIYGLVVALALLFANPFVS</sequence>
<accession>Q9MUT0</accession>
<keyword id="KW-0066">ATP synthesis</keyword>
<keyword id="KW-0138">CF(0)</keyword>
<keyword id="KW-0150">Chloroplast</keyword>
<keyword id="KW-0375">Hydrogen ion transport</keyword>
<keyword id="KW-0406">Ion transport</keyword>
<keyword id="KW-0446">Lipid-binding</keyword>
<keyword id="KW-0472">Membrane</keyword>
<keyword id="KW-0934">Plastid</keyword>
<keyword id="KW-0793">Thylakoid</keyword>
<keyword id="KW-0812">Transmembrane</keyword>
<keyword id="KW-1133">Transmembrane helix</keyword>
<keyword id="KW-0813">Transport</keyword>
<organism>
    <name type="scientific">Mesostigma viride</name>
    <name type="common">Green alga</name>
    <dbReference type="NCBI Taxonomy" id="41882"/>
    <lineage>
        <taxon>Eukaryota</taxon>
        <taxon>Viridiplantae</taxon>
        <taxon>Streptophyta</taxon>
        <taxon>Mesostigmatophyceae</taxon>
        <taxon>Mesostigmatales</taxon>
        <taxon>Mesostigmataceae</taxon>
        <taxon>Mesostigma</taxon>
    </lineage>
</organism>